<proteinExistence type="evidence at protein level"/>
<gene>
    <name type="primary">cycA</name>
    <name type="ordered locus">RCAP_rcc01240</name>
</gene>
<evidence type="ECO:0000269" key="1">
    <source>
    </source>
</evidence>
<evidence type="ECO:0000305" key="2"/>
<evidence type="ECO:0007829" key="3">
    <source>
        <dbReference type="PDB" id="1C2N"/>
    </source>
</evidence>
<evidence type="ECO:0007829" key="4">
    <source>
        <dbReference type="PDB" id="1VYD"/>
    </source>
</evidence>
<name>CYC2_RHOCB</name>
<dbReference type="EMBL" id="M12776">
    <property type="protein sequence ID" value="AAA26102.1"/>
    <property type="molecule type" value="Genomic_DNA"/>
</dbReference>
<dbReference type="EMBL" id="CP001312">
    <property type="protein sequence ID" value="ADE84997.1"/>
    <property type="molecule type" value="Genomic_DNA"/>
</dbReference>
<dbReference type="PIR" id="A25452">
    <property type="entry name" value="CCRF2C"/>
</dbReference>
<dbReference type="PDB" id="1C2N">
    <property type="method" value="NMR"/>
    <property type="chains" value="A=1-137"/>
</dbReference>
<dbReference type="PDB" id="1C2R">
    <property type="method" value="X-ray"/>
    <property type="resolution" value="2.50 A"/>
    <property type="chains" value="A/B=22-137"/>
</dbReference>
<dbReference type="PDB" id="1VYD">
    <property type="method" value="X-ray"/>
    <property type="resolution" value="2.30 A"/>
    <property type="chains" value="A/B=22-137"/>
</dbReference>
<dbReference type="PDBsum" id="1C2N"/>
<dbReference type="PDBsum" id="1C2R"/>
<dbReference type="PDBsum" id="1VYD"/>
<dbReference type="BMRB" id="P00094"/>
<dbReference type="SMR" id="P00094"/>
<dbReference type="IntAct" id="P00094">
    <property type="interactions" value="1"/>
</dbReference>
<dbReference type="STRING" id="272942.RCAP_rcc01240"/>
<dbReference type="KEGG" id="rcp:RCAP_rcc01240"/>
<dbReference type="eggNOG" id="COG3474">
    <property type="taxonomic scope" value="Bacteria"/>
</dbReference>
<dbReference type="HOGENOM" id="CLU_060944_1_0_5"/>
<dbReference type="OrthoDB" id="9805828at2"/>
<dbReference type="EvolutionaryTrace" id="P00094"/>
<dbReference type="Proteomes" id="UP000002361">
    <property type="component" value="Chromosome"/>
</dbReference>
<dbReference type="GO" id="GO:0009055">
    <property type="term" value="F:electron transfer activity"/>
    <property type="evidence" value="ECO:0007669"/>
    <property type="project" value="InterPro"/>
</dbReference>
<dbReference type="GO" id="GO:0020037">
    <property type="term" value="F:heme binding"/>
    <property type="evidence" value="ECO:0007669"/>
    <property type="project" value="InterPro"/>
</dbReference>
<dbReference type="GO" id="GO:0046872">
    <property type="term" value="F:metal ion binding"/>
    <property type="evidence" value="ECO:0007669"/>
    <property type="project" value="UniProtKB-KW"/>
</dbReference>
<dbReference type="GO" id="GO:0015979">
    <property type="term" value="P:photosynthesis"/>
    <property type="evidence" value="ECO:0007669"/>
    <property type="project" value="UniProtKB-KW"/>
</dbReference>
<dbReference type="Gene3D" id="1.10.760.10">
    <property type="entry name" value="Cytochrome c-like domain"/>
    <property type="match status" value="1"/>
</dbReference>
<dbReference type="InterPro" id="IPR009056">
    <property type="entry name" value="Cyt_c-like_dom"/>
</dbReference>
<dbReference type="InterPro" id="IPR036909">
    <property type="entry name" value="Cyt_c-like_dom_sf"/>
</dbReference>
<dbReference type="InterPro" id="IPR002327">
    <property type="entry name" value="Cyt_c_1A/1B"/>
</dbReference>
<dbReference type="PANTHER" id="PTHR11961">
    <property type="entry name" value="CYTOCHROME C"/>
    <property type="match status" value="1"/>
</dbReference>
<dbReference type="SUPFAM" id="SSF46626">
    <property type="entry name" value="Cytochrome c"/>
    <property type="match status" value="1"/>
</dbReference>
<dbReference type="PROSITE" id="PS51007">
    <property type="entry name" value="CYTC"/>
    <property type="match status" value="1"/>
</dbReference>
<protein>
    <recommendedName>
        <fullName>Cytochrome c2</fullName>
    </recommendedName>
</protein>
<accession>P00094</accession>
<accession>D5ASA6</accession>
<feature type="signal peptide" evidence="1">
    <location>
        <begin position="1"/>
        <end position="21"/>
    </location>
</feature>
<feature type="chain" id="PRO_0000006497" description="Cytochrome c2" evidence="1">
    <location>
        <begin position="22"/>
        <end position="137"/>
    </location>
</feature>
<feature type="binding site" description="covalent">
    <location>
        <position position="34"/>
    </location>
    <ligand>
        <name>heme c</name>
        <dbReference type="ChEBI" id="CHEBI:61717"/>
    </ligand>
</feature>
<feature type="binding site" description="covalent">
    <location>
        <position position="37"/>
    </location>
    <ligand>
        <name>heme c</name>
        <dbReference type="ChEBI" id="CHEBI:61717"/>
    </ligand>
</feature>
<feature type="binding site" description="axial binding residue">
    <location>
        <position position="38"/>
    </location>
    <ligand>
        <name>heme c</name>
        <dbReference type="ChEBI" id="CHEBI:61717"/>
    </ligand>
    <ligandPart>
        <name>Fe</name>
        <dbReference type="ChEBI" id="CHEBI:18248"/>
    </ligandPart>
</feature>
<feature type="binding site" description="axial binding residue">
    <location>
        <position position="117"/>
    </location>
    <ligand>
        <name>heme c</name>
        <dbReference type="ChEBI" id="CHEBI:61717"/>
    </ligand>
    <ligandPart>
        <name>Fe</name>
        <dbReference type="ChEBI" id="CHEBI:18248"/>
    </ligandPart>
</feature>
<feature type="sequence variant" description="In strain: 2.3.1.">
    <original>L</original>
    <variation>T</variation>
    <location>
        <position position="108"/>
    </location>
</feature>
<feature type="sequence variant" description="In strain: 2.3.1.">
    <original>T</original>
    <variation>S</variation>
    <location>
        <position position="115"/>
    </location>
</feature>
<feature type="helix" evidence="4">
    <location>
        <begin position="24"/>
        <end position="30"/>
    </location>
</feature>
<feature type="helix" evidence="4">
    <location>
        <begin position="31"/>
        <end position="33"/>
    </location>
</feature>
<feature type="turn" evidence="4">
    <location>
        <begin position="34"/>
        <end position="37"/>
    </location>
</feature>
<feature type="strand" evidence="4">
    <location>
        <begin position="47"/>
        <end position="49"/>
    </location>
</feature>
<feature type="strand" evidence="4">
    <location>
        <begin position="53"/>
        <end position="55"/>
    </location>
</feature>
<feature type="helix" evidence="4">
    <location>
        <begin position="76"/>
        <end position="83"/>
    </location>
</feature>
<feature type="helix" evidence="4">
    <location>
        <begin position="90"/>
        <end position="98"/>
    </location>
</feature>
<feature type="helix" evidence="4">
    <location>
        <begin position="100"/>
        <end position="108"/>
    </location>
</feature>
<feature type="strand" evidence="3">
    <location>
        <begin position="122"/>
        <end position="124"/>
    </location>
</feature>
<feature type="helix" evidence="4">
    <location>
        <begin position="125"/>
        <end position="134"/>
    </location>
</feature>
<keyword id="KW-0002">3D-structure</keyword>
<keyword id="KW-0903">Direct protein sequencing</keyword>
<keyword id="KW-0249">Electron transport</keyword>
<keyword id="KW-0349">Heme</keyword>
<keyword id="KW-0408">Iron</keyword>
<keyword id="KW-0479">Metal-binding</keyword>
<keyword id="KW-0602">Photosynthesis</keyword>
<keyword id="KW-1185">Reference proteome</keyword>
<keyword id="KW-0732">Signal</keyword>
<keyword id="KW-0813">Transport</keyword>
<reference key="1">
    <citation type="journal article" date="1986" name="Proc. Natl. Acad. Sci. U.S.A.">
        <title>Cytochrome c2 is not essential for photosynthetic growth of Rhodopseudomonas capsulata.</title>
        <authorList>
            <person name="Daldal F."/>
            <person name="Cheng S."/>
            <person name="Applebaum J."/>
            <person name="Davidson E."/>
            <person name="Prince R.C."/>
        </authorList>
    </citation>
    <scope>NUCLEOTIDE SEQUENCE [GENOMIC DNA]</scope>
    <source>
        <strain>ATCC BAA-309 / NBRC 16581 / SB1003</strain>
    </source>
</reference>
<reference key="2">
    <citation type="journal article" date="2010" name="J. Bacteriol.">
        <title>Complete genome sequence of the photosynthetic purple nonsulfur bacterium Rhodobacter capsulatus SB 1003.</title>
        <authorList>
            <person name="Strnad H."/>
            <person name="Lapidus A."/>
            <person name="Paces J."/>
            <person name="Ulbrich P."/>
            <person name="Vlcek C."/>
            <person name="Paces V."/>
            <person name="Haselkorn R."/>
        </authorList>
    </citation>
    <scope>NUCLEOTIDE SEQUENCE [LARGE SCALE GENOMIC DNA]</scope>
    <source>
        <strain>ATCC BAA-309 / NBRC 16581 / SB1003</strain>
    </source>
</reference>
<reference key="3">
    <citation type="journal article" date="1979" name="Nature">
        <title>Cytochrome c2 sequence variation among the recognised species of purple nonsulphur photosynthetic bacteria.</title>
        <authorList>
            <person name="Ambler R.P."/>
            <person name="Daniel M."/>
            <person name="Hermoso J."/>
            <person name="Meyer T.E."/>
            <person name="Bartsch R.G."/>
            <person name="Kamen M.D."/>
        </authorList>
    </citation>
    <scope>PROTEIN SEQUENCE OF 22-137</scope>
    <source>
        <strain>ATCC 11166 / 2.3.1</strain>
        <strain>ATCC 23782 / St Louis</strain>
    </source>
</reference>
<reference key="4">
    <citation type="journal article" date="1991" name="J. Mol. Biol.">
        <title>Molecular structure of cytochrome c2 isolated from Rhodobacter capsulatus determined at 2.5-A resolution.</title>
        <authorList>
            <person name="Benning M.M."/>
            <person name="Wesenberg G."/>
            <person name="Caffrey M.S."/>
            <person name="Bartsch R.G."/>
            <person name="Meyer T.E."/>
            <person name="Cusanovich M.A."/>
            <person name="Rayment I."/>
            <person name="Holden H.M."/>
        </authorList>
    </citation>
    <scope>X-RAY CRYSTALLOGRAPHY (2.5 ANGSTROMS)</scope>
</reference>
<reference key="5">
    <citation type="journal article" date="1990" name="Biochemistry">
        <title>Assignment of the 1H and 15N NMR spectra of Rhodobacter capsulatus ferrocytochrome c2.</title>
        <authorList>
            <person name="Gooley P.R."/>
            <person name="Caffrey M.S."/>
            <person name="Cusanovich M.A."/>
            <person name="McKenzie N.E."/>
        </authorList>
    </citation>
    <scope>STRUCTURE BY NMR</scope>
</reference>
<reference key="6">
    <citation type="journal article" date="1998" name="J. Mol. Biol.">
        <title>Solution structure, rotational diffusion anisotropy and local backbone dynamics of Rhodobacter capsulatus cytochrome c2.</title>
        <authorList>
            <person name="Cordier F."/>
            <person name="Caffrey M."/>
            <person name="Brutscher B."/>
            <person name="Cusanovich M.A."/>
            <person name="Marion D."/>
            <person name="Blackledge M."/>
        </authorList>
    </citation>
    <scope>STRUCTURE BY NMR</scope>
    <source>
        <strain>ATCC BAA-309 / NBRC 16581 / SB1003</strain>
    </source>
</reference>
<organism>
    <name type="scientific">Rhodobacter capsulatus (strain ATCC BAA-309 / NBRC 16581 / SB1003)</name>
    <dbReference type="NCBI Taxonomy" id="272942"/>
    <lineage>
        <taxon>Bacteria</taxon>
        <taxon>Pseudomonadati</taxon>
        <taxon>Pseudomonadota</taxon>
        <taxon>Alphaproteobacteria</taxon>
        <taxon>Rhodobacterales</taxon>
        <taxon>Rhodobacter group</taxon>
        <taxon>Rhodobacter</taxon>
    </lineage>
</organism>
<sequence length="137" mass="14279">MKISLTAATVAALVLAAPAFAGDAAKGEKEFNKCKTCHSIIAPDGTEIVKGAKTGPNLYGVVGRTAGTYPEFKYKDSIVALGASGFAWTEEDIATYVKDPGAFLKEKLDDKKAKTGMAFKLAKGGEDVAAYLASVVK</sequence>
<comment type="function">
    <text>Cytochrome c2 is found mainly in purple, non-sulfur, photosynthetic bacteria where it functions as the electron donor to the oxidized bacteriochlorophyll in the photophosphorylation pathway. However, it may also have a role in the respiratory chain and is found in some non-photosynthetic bacteria.</text>
</comment>
<comment type="PTM">
    <text>Binds 1 heme c group covalently per subunit.</text>
</comment>
<comment type="similarity">
    <text evidence="2">Belongs to the cytochrome c family.</text>
</comment>